<evidence type="ECO:0000255" key="1">
    <source>
        <dbReference type="HAMAP-Rule" id="MF_00168"/>
    </source>
</evidence>
<proteinExistence type="inferred from homology"/>
<feature type="chain" id="PRO_0000135517" description="Queuine tRNA-ribosyltransferase">
    <location>
        <begin position="1"/>
        <end position="375"/>
    </location>
</feature>
<feature type="region of interest" description="RNA binding" evidence="1">
    <location>
        <begin position="245"/>
        <end position="251"/>
    </location>
</feature>
<feature type="region of interest" description="RNA binding; important for wobble base 34 recognition" evidence="1">
    <location>
        <begin position="269"/>
        <end position="273"/>
    </location>
</feature>
<feature type="active site" description="Proton acceptor" evidence="1">
    <location>
        <position position="89"/>
    </location>
</feature>
<feature type="active site" description="Nucleophile" evidence="1">
    <location>
        <position position="264"/>
    </location>
</feature>
<feature type="binding site" evidence="1">
    <location>
        <begin position="89"/>
        <end position="93"/>
    </location>
    <ligand>
        <name>substrate</name>
    </ligand>
</feature>
<feature type="binding site" evidence="1">
    <location>
        <position position="143"/>
    </location>
    <ligand>
        <name>substrate</name>
    </ligand>
</feature>
<feature type="binding site" evidence="1">
    <location>
        <position position="187"/>
    </location>
    <ligand>
        <name>substrate</name>
    </ligand>
</feature>
<feature type="binding site" evidence="1">
    <location>
        <position position="214"/>
    </location>
    <ligand>
        <name>substrate</name>
    </ligand>
</feature>
<feature type="binding site" evidence="1">
    <location>
        <position position="302"/>
    </location>
    <ligand>
        <name>Zn(2+)</name>
        <dbReference type="ChEBI" id="CHEBI:29105"/>
    </ligand>
</feature>
<feature type="binding site" evidence="1">
    <location>
        <position position="304"/>
    </location>
    <ligand>
        <name>Zn(2+)</name>
        <dbReference type="ChEBI" id="CHEBI:29105"/>
    </ligand>
</feature>
<feature type="binding site" evidence="1">
    <location>
        <position position="307"/>
    </location>
    <ligand>
        <name>Zn(2+)</name>
        <dbReference type="ChEBI" id="CHEBI:29105"/>
    </ligand>
</feature>
<feature type="binding site" evidence="1">
    <location>
        <position position="333"/>
    </location>
    <ligand>
        <name>Zn(2+)</name>
        <dbReference type="ChEBI" id="CHEBI:29105"/>
    </ligand>
</feature>
<accession>Q8Z8Y0</accession>
<protein>
    <recommendedName>
        <fullName evidence="1">Queuine tRNA-ribosyltransferase</fullName>
        <ecNumber evidence="1">2.4.2.29</ecNumber>
    </recommendedName>
    <alternativeName>
        <fullName evidence="1">Guanine insertion enzyme</fullName>
    </alternativeName>
    <alternativeName>
        <fullName evidence="1">tRNA-guanine transglycosylase</fullName>
    </alternativeName>
</protein>
<sequence length="375" mass="42534">MKFELDTTDGRARRGRLVFDRGVVETPAFMPVGTYGTVKGMTPEEVEATGAQIILGNTFHLWLRPGQEIMKLHGDLHDFMQWKGPILTDSGGFQVFSLGDIRKITEQGVHFRNPINGDPIFLDPEKSMEIQYDLGSDIVMIFDECTPYPADWDYAKRSMEMSLRWAKRSRDRFDSLGNKNALFGIIQGSVYEDLRDISVKGLVEIGFDGYAVGGLAVGEPKADMHRILEHVCPQIPADKPRYLMGVGKPEDLVEGVRRGIDMFDCVMPTRNARNGHLFVTDGVVKIRNAKHKSDISPLDAECDCYTCRNYSRAYLHHLDRCNEILGARLNTIHNLRYYQRLMAGLRKAIEEGKLESFVTEFYQRQGRPVPPLNVD</sequence>
<dbReference type="EC" id="2.4.2.29" evidence="1"/>
<dbReference type="EMBL" id="AL513382">
    <property type="protein sequence ID" value="CAD08861.1"/>
    <property type="molecule type" value="Genomic_DNA"/>
</dbReference>
<dbReference type="EMBL" id="AE014613">
    <property type="protein sequence ID" value="AAO70048.1"/>
    <property type="molecule type" value="Genomic_DNA"/>
</dbReference>
<dbReference type="RefSeq" id="NP_455000.1">
    <property type="nucleotide sequence ID" value="NC_003198.1"/>
</dbReference>
<dbReference type="RefSeq" id="WP_000667304.1">
    <property type="nucleotide sequence ID" value="NZ_WSUR01000026.1"/>
</dbReference>
<dbReference type="SMR" id="Q8Z8Y0"/>
<dbReference type="STRING" id="220341.gene:17584466"/>
<dbReference type="KEGG" id="stt:t2458"/>
<dbReference type="KEGG" id="sty:STY0443"/>
<dbReference type="PATRIC" id="fig|220341.7.peg.441"/>
<dbReference type="eggNOG" id="COG0343">
    <property type="taxonomic scope" value="Bacteria"/>
</dbReference>
<dbReference type="HOGENOM" id="CLU_022060_0_1_6"/>
<dbReference type="OMA" id="IDLFDCV"/>
<dbReference type="OrthoDB" id="9805417at2"/>
<dbReference type="UniPathway" id="UPA00392"/>
<dbReference type="Proteomes" id="UP000000541">
    <property type="component" value="Chromosome"/>
</dbReference>
<dbReference type="Proteomes" id="UP000002670">
    <property type="component" value="Chromosome"/>
</dbReference>
<dbReference type="GO" id="GO:0005829">
    <property type="term" value="C:cytosol"/>
    <property type="evidence" value="ECO:0007669"/>
    <property type="project" value="TreeGrafter"/>
</dbReference>
<dbReference type="GO" id="GO:0046872">
    <property type="term" value="F:metal ion binding"/>
    <property type="evidence" value="ECO:0007669"/>
    <property type="project" value="UniProtKB-KW"/>
</dbReference>
<dbReference type="GO" id="GO:0008479">
    <property type="term" value="F:tRNA-guanosine(34) queuine transglycosylase activity"/>
    <property type="evidence" value="ECO:0007669"/>
    <property type="project" value="UniProtKB-UniRule"/>
</dbReference>
<dbReference type="GO" id="GO:0008616">
    <property type="term" value="P:queuosine biosynthetic process"/>
    <property type="evidence" value="ECO:0007669"/>
    <property type="project" value="UniProtKB-UniRule"/>
</dbReference>
<dbReference type="GO" id="GO:0002099">
    <property type="term" value="P:tRNA wobble guanine modification"/>
    <property type="evidence" value="ECO:0007669"/>
    <property type="project" value="TreeGrafter"/>
</dbReference>
<dbReference type="GO" id="GO:0101030">
    <property type="term" value="P:tRNA-guanine transglycosylation"/>
    <property type="evidence" value="ECO:0007669"/>
    <property type="project" value="InterPro"/>
</dbReference>
<dbReference type="FunFam" id="3.20.20.105:FF:000001">
    <property type="entry name" value="Queuine tRNA-ribosyltransferase"/>
    <property type="match status" value="1"/>
</dbReference>
<dbReference type="Gene3D" id="3.20.20.105">
    <property type="entry name" value="Queuine tRNA-ribosyltransferase-like"/>
    <property type="match status" value="1"/>
</dbReference>
<dbReference type="HAMAP" id="MF_00168">
    <property type="entry name" value="Q_tRNA_Tgt"/>
    <property type="match status" value="1"/>
</dbReference>
<dbReference type="InterPro" id="IPR050076">
    <property type="entry name" value="ArchSynthase1/Queuine_TRR"/>
</dbReference>
<dbReference type="InterPro" id="IPR004803">
    <property type="entry name" value="TGT"/>
</dbReference>
<dbReference type="InterPro" id="IPR036511">
    <property type="entry name" value="TGT-like_sf"/>
</dbReference>
<dbReference type="InterPro" id="IPR002616">
    <property type="entry name" value="tRNA_ribo_trans-like"/>
</dbReference>
<dbReference type="NCBIfam" id="TIGR00430">
    <property type="entry name" value="Q_tRNA_tgt"/>
    <property type="match status" value="1"/>
</dbReference>
<dbReference type="NCBIfam" id="TIGR00449">
    <property type="entry name" value="tgt_general"/>
    <property type="match status" value="1"/>
</dbReference>
<dbReference type="PANTHER" id="PTHR46499">
    <property type="entry name" value="QUEUINE TRNA-RIBOSYLTRANSFERASE"/>
    <property type="match status" value="1"/>
</dbReference>
<dbReference type="PANTHER" id="PTHR46499:SF1">
    <property type="entry name" value="QUEUINE TRNA-RIBOSYLTRANSFERASE"/>
    <property type="match status" value="1"/>
</dbReference>
<dbReference type="Pfam" id="PF01702">
    <property type="entry name" value="TGT"/>
    <property type="match status" value="1"/>
</dbReference>
<dbReference type="SUPFAM" id="SSF51713">
    <property type="entry name" value="tRNA-guanine transglycosylase"/>
    <property type="match status" value="1"/>
</dbReference>
<comment type="function">
    <text evidence="1">Catalyzes the base-exchange of a guanine (G) residue with the queuine precursor 7-aminomethyl-7-deazaguanine (PreQ1) at position 34 (anticodon wobble position) in tRNAs with GU(N) anticodons (tRNA-Asp, -Asn, -His and -Tyr). Catalysis occurs through a double-displacement mechanism. The nucleophile active site attacks the C1' of nucleotide 34 to detach the guanine base from the RNA, forming a covalent enzyme-RNA intermediate. The proton acceptor active site deprotonates the incoming PreQ1, allowing a nucleophilic attack on the C1' of the ribose to form the product. After dissociation, two additional enzymatic reactions on the tRNA convert PreQ1 to queuine (Q), resulting in the hypermodified nucleoside queuosine (7-(((4,5-cis-dihydroxy-2-cyclopenten-1-yl)amino)methyl)-7-deazaguanosine).</text>
</comment>
<comment type="catalytic activity">
    <reaction evidence="1">
        <text>7-aminomethyl-7-carbaguanine + guanosine(34) in tRNA = 7-aminomethyl-7-carbaguanosine(34) in tRNA + guanine</text>
        <dbReference type="Rhea" id="RHEA:24104"/>
        <dbReference type="Rhea" id="RHEA-COMP:10341"/>
        <dbReference type="Rhea" id="RHEA-COMP:10342"/>
        <dbReference type="ChEBI" id="CHEBI:16235"/>
        <dbReference type="ChEBI" id="CHEBI:58703"/>
        <dbReference type="ChEBI" id="CHEBI:74269"/>
        <dbReference type="ChEBI" id="CHEBI:82833"/>
        <dbReference type="EC" id="2.4.2.29"/>
    </reaction>
</comment>
<comment type="cofactor">
    <cofactor evidence="1">
        <name>Zn(2+)</name>
        <dbReference type="ChEBI" id="CHEBI:29105"/>
    </cofactor>
    <text evidence="1">Binds 1 zinc ion per subunit.</text>
</comment>
<comment type="pathway">
    <text evidence="1">tRNA modification; tRNA-queuosine biosynthesis.</text>
</comment>
<comment type="subunit">
    <text evidence="1">Homodimer. Within each dimer, one monomer is responsible for RNA recognition and catalysis, while the other monomer binds to the replacement base PreQ1.</text>
</comment>
<comment type="similarity">
    <text evidence="1">Belongs to the queuine tRNA-ribosyltransferase family.</text>
</comment>
<gene>
    <name evidence="1" type="primary">tgt</name>
    <name type="ordered locus">STY0443</name>
    <name type="ordered locus">t2458</name>
</gene>
<organism>
    <name type="scientific">Salmonella typhi</name>
    <dbReference type="NCBI Taxonomy" id="90370"/>
    <lineage>
        <taxon>Bacteria</taxon>
        <taxon>Pseudomonadati</taxon>
        <taxon>Pseudomonadota</taxon>
        <taxon>Gammaproteobacteria</taxon>
        <taxon>Enterobacterales</taxon>
        <taxon>Enterobacteriaceae</taxon>
        <taxon>Salmonella</taxon>
    </lineage>
</organism>
<keyword id="KW-0328">Glycosyltransferase</keyword>
<keyword id="KW-0479">Metal-binding</keyword>
<keyword id="KW-0671">Queuosine biosynthesis</keyword>
<keyword id="KW-0808">Transferase</keyword>
<keyword id="KW-0819">tRNA processing</keyword>
<keyword id="KW-0862">Zinc</keyword>
<name>TGT_SALTI</name>
<reference key="1">
    <citation type="journal article" date="2001" name="Nature">
        <title>Complete genome sequence of a multiple drug resistant Salmonella enterica serovar Typhi CT18.</title>
        <authorList>
            <person name="Parkhill J."/>
            <person name="Dougan G."/>
            <person name="James K.D."/>
            <person name="Thomson N.R."/>
            <person name="Pickard D."/>
            <person name="Wain J."/>
            <person name="Churcher C.M."/>
            <person name="Mungall K.L."/>
            <person name="Bentley S.D."/>
            <person name="Holden M.T.G."/>
            <person name="Sebaihia M."/>
            <person name="Baker S."/>
            <person name="Basham D."/>
            <person name="Brooks K."/>
            <person name="Chillingworth T."/>
            <person name="Connerton P."/>
            <person name="Cronin A."/>
            <person name="Davis P."/>
            <person name="Davies R.M."/>
            <person name="Dowd L."/>
            <person name="White N."/>
            <person name="Farrar J."/>
            <person name="Feltwell T."/>
            <person name="Hamlin N."/>
            <person name="Haque A."/>
            <person name="Hien T.T."/>
            <person name="Holroyd S."/>
            <person name="Jagels K."/>
            <person name="Krogh A."/>
            <person name="Larsen T.S."/>
            <person name="Leather S."/>
            <person name="Moule S."/>
            <person name="O'Gaora P."/>
            <person name="Parry C."/>
            <person name="Quail M.A."/>
            <person name="Rutherford K.M."/>
            <person name="Simmonds M."/>
            <person name="Skelton J."/>
            <person name="Stevens K."/>
            <person name="Whitehead S."/>
            <person name="Barrell B.G."/>
        </authorList>
    </citation>
    <scope>NUCLEOTIDE SEQUENCE [LARGE SCALE GENOMIC DNA]</scope>
    <source>
        <strain>CT18</strain>
    </source>
</reference>
<reference key="2">
    <citation type="journal article" date="2003" name="J. Bacteriol.">
        <title>Comparative genomics of Salmonella enterica serovar Typhi strains Ty2 and CT18.</title>
        <authorList>
            <person name="Deng W."/>
            <person name="Liou S.-R."/>
            <person name="Plunkett G. III"/>
            <person name="Mayhew G.F."/>
            <person name="Rose D.J."/>
            <person name="Burland V."/>
            <person name="Kodoyianni V."/>
            <person name="Schwartz D.C."/>
            <person name="Blattner F.R."/>
        </authorList>
    </citation>
    <scope>NUCLEOTIDE SEQUENCE [LARGE SCALE GENOMIC DNA]</scope>
    <source>
        <strain>ATCC 700931 / Ty2</strain>
    </source>
</reference>